<organism>
    <name type="scientific">Homo sapiens</name>
    <name type="common">Human</name>
    <dbReference type="NCBI Taxonomy" id="9606"/>
    <lineage>
        <taxon>Eukaryota</taxon>
        <taxon>Metazoa</taxon>
        <taxon>Chordata</taxon>
        <taxon>Craniata</taxon>
        <taxon>Vertebrata</taxon>
        <taxon>Euteleostomi</taxon>
        <taxon>Mammalia</taxon>
        <taxon>Eutheria</taxon>
        <taxon>Euarchontoglires</taxon>
        <taxon>Primates</taxon>
        <taxon>Haplorrhini</taxon>
        <taxon>Catarrhini</taxon>
        <taxon>Hominidae</taxon>
        <taxon>Homo</taxon>
    </lineage>
</organism>
<dbReference type="EMBL" id="AF533707">
    <property type="protein sequence ID" value="AAQ09020.1"/>
    <property type="molecule type" value="mRNA"/>
</dbReference>
<dbReference type="EMBL" id="AK093156">
    <property type="protein sequence ID" value="BAC04076.1"/>
    <property type="molecule type" value="mRNA"/>
</dbReference>
<dbReference type="EMBL" id="AK311878">
    <property type="protein sequence ID" value="BAG34819.1"/>
    <property type="status" value="ALT_SEQ"/>
    <property type="molecule type" value="mRNA"/>
</dbReference>
<dbReference type="EMBL" id="AC009412">
    <property type="protein sequence ID" value="AAS07509.1"/>
    <property type="status" value="ALT_SEQ"/>
    <property type="molecule type" value="Genomic_DNA"/>
</dbReference>
<dbReference type="EMBL" id="CH878731">
    <property type="protein sequence ID" value="EAW55045.1"/>
    <property type="molecule type" value="Genomic_DNA"/>
</dbReference>
<dbReference type="EMBL" id="BC006110">
    <property type="protein sequence ID" value="AAH06110.2"/>
    <property type="molecule type" value="mRNA"/>
</dbReference>
<dbReference type="EMBL" id="BC142977">
    <property type="protein sequence ID" value="AAI42978.1"/>
    <property type="molecule type" value="mRNA"/>
</dbReference>
<dbReference type="CCDS" id="CCDS34599.1"/>
<dbReference type="RefSeq" id="NP_001032240.1">
    <property type="nucleotide sequence ID" value="NM_001037163.2"/>
</dbReference>
<dbReference type="BioGRID" id="124261">
    <property type="interactions" value="4"/>
</dbReference>
<dbReference type="FunCoup" id="Q7Z4H9">
    <property type="interactions" value="426"/>
</dbReference>
<dbReference type="IntAct" id="Q7Z4H9">
    <property type="interactions" value="2"/>
</dbReference>
<dbReference type="STRING" id="9606.ENSP00000317289"/>
<dbReference type="GlyGen" id="Q7Z4H9">
    <property type="glycosylation" value="1 site"/>
</dbReference>
<dbReference type="iPTMnet" id="Q7Z4H9"/>
<dbReference type="PhosphoSitePlus" id="Q7Z4H9"/>
<dbReference type="BioMuta" id="FAM220A"/>
<dbReference type="DMDM" id="74713515"/>
<dbReference type="MassIVE" id="Q7Z4H9"/>
<dbReference type="PaxDb" id="9606-ENSP00000317289"/>
<dbReference type="PeptideAtlas" id="Q7Z4H9"/>
<dbReference type="Antibodypedia" id="71301">
    <property type="antibodies" value="13 antibodies from 7 providers"/>
</dbReference>
<dbReference type="DNASU" id="84792"/>
<dbReference type="Ensembl" id="ENST00000313324.9">
    <property type="protein sequence ID" value="ENSP00000317289.4"/>
    <property type="gene ID" value="ENSG00000178397.13"/>
</dbReference>
<dbReference type="Ensembl" id="ENST00000524898.2">
    <property type="protein sequence ID" value="ENSP00000432444.2"/>
    <property type="gene ID" value="ENSG00000178397.13"/>
</dbReference>
<dbReference type="Ensembl" id="ENST00000530143.2">
    <property type="protein sequence ID" value="ENSP00000436886.2"/>
    <property type="gene ID" value="ENSG00000178397.13"/>
</dbReference>
<dbReference type="GeneID" id="84792"/>
<dbReference type="KEGG" id="hsa:84792"/>
<dbReference type="MANE-Select" id="ENST00000313324.9">
    <property type="protein sequence ID" value="ENSP00000317289.4"/>
    <property type="RefSeq nucleotide sequence ID" value="NM_001037163.2"/>
    <property type="RefSeq protein sequence ID" value="NP_001032240.1"/>
</dbReference>
<dbReference type="UCSC" id="uc003spu.3">
    <property type="organism name" value="human"/>
</dbReference>
<dbReference type="AGR" id="HGNC:22422"/>
<dbReference type="CTD" id="84792"/>
<dbReference type="DisGeNET" id="84792"/>
<dbReference type="GeneCards" id="FAM220A"/>
<dbReference type="HGNC" id="HGNC:22422">
    <property type="gene designation" value="FAM220A"/>
</dbReference>
<dbReference type="HPA" id="ENSG00000178397">
    <property type="expression patterns" value="Tissue enhanced (skeletal muscle, testis)"/>
</dbReference>
<dbReference type="MIM" id="616628">
    <property type="type" value="gene"/>
</dbReference>
<dbReference type="neXtProt" id="NX_Q7Z4H9"/>
<dbReference type="OpenTargets" id="ENSG00000178397"/>
<dbReference type="PharmGKB" id="PA165617654"/>
<dbReference type="VEuPathDB" id="HostDB:ENSG00000178397"/>
<dbReference type="eggNOG" id="ENOG502S2EY">
    <property type="taxonomic scope" value="Eukaryota"/>
</dbReference>
<dbReference type="GeneTree" id="ENSGT00390000014156"/>
<dbReference type="HOGENOM" id="CLU_089176_0_0_1"/>
<dbReference type="InParanoid" id="Q7Z4H9"/>
<dbReference type="OMA" id="CHKGEPW"/>
<dbReference type="OrthoDB" id="60433at2759"/>
<dbReference type="PAN-GO" id="Q7Z4H9">
    <property type="GO annotations" value="4 GO annotations based on evolutionary models"/>
</dbReference>
<dbReference type="PhylomeDB" id="Q7Z4H9"/>
<dbReference type="TreeFam" id="TF336869"/>
<dbReference type="PathwayCommons" id="Q7Z4H9"/>
<dbReference type="SignaLink" id="Q7Z4H9"/>
<dbReference type="BioGRID-ORCS" id="84792">
    <property type="hits" value="22 hits in 1124 CRISPR screens"/>
</dbReference>
<dbReference type="GenomeRNAi" id="84792"/>
<dbReference type="Pharos" id="Q7Z4H9">
    <property type="development level" value="Tdark"/>
</dbReference>
<dbReference type="PRO" id="PR:Q7Z4H9"/>
<dbReference type="Proteomes" id="UP000005640">
    <property type="component" value="Chromosome 7"/>
</dbReference>
<dbReference type="RNAct" id="Q7Z4H9">
    <property type="molecule type" value="protein"/>
</dbReference>
<dbReference type="Bgee" id="ENSG00000178397">
    <property type="expression patterns" value="Expressed in secondary oocyte and 190 other cell types or tissues"/>
</dbReference>
<dbReference type="ExpressionAtlas" id="Q7Z4H9">
    <property type="expression patterns" value="baseline and differential"/>
</dbReference>
<dbReference type="GO" id="GO:0001669">
    <property type="term" value="C:acrosomal vesicle"/>
    <property type="evidence" value="ECO:0000250"/>
    <property type="project" value="UniProtKB"/>
</dbReference>
<dbReference type="GO" id="GO:0005634">
    <property type="term" value="C:nucleus"/>
    <property type="evidence" value="ECO:0000318"/>
    <property type="project" value="GO_Central"/>
</dbReference>
<dbReference type="GO" id="GO:0097677">
    <property type="term" value="F:STAT family protein binding"/>
    <property type="evidence" value="ECO:0000318"/>
    <property type="project" value="GO_Central"/>
</dbReference>
<dbReference type="GO" id="GO:0000122">
    <property type="term" value="P:negative regulation of transcription by RNA polymerase II"/>
    <property type="evidence" value="ECO:0000318"/>
    <property type="project" value="GO_Central"/>
</dbReference>
<dbReference type="InterPro" id="IPR040355">
    <property type="entry name" value="FAM220A"/>
</dbReference>
<dbReference type="InterPro" id="IPR029155">
    <property type="entry name" value="SIPAR"/>
</dbReference>
<dbReference type="PANTHER" id="PTHR31980">
    <property type="entry name" value="PROTEIN FAM220A"/>
    <property type="match status" value="1"/>
</dbReference>
<dbReference type="PANTHER" id="PTHR31980:SF1">
    <property type="entry name" value="PROTEIN FAM220A"/>
    <property type="match status" value="1"/>
</dbReference>
<dbReference type="Pfam" id="PF15487">
    <property type="entry name" value="FAM220"/>
    <property type="match status" value="1"/>
</dbReference>
<reference key="1">
    <citation type="submission" date="2002-07" db="EMBL/GenBank/DDBJ databases">
        <authorList>
            <person name="Ding P."/>
            <person name="Han W."/>
            <person name="Xia D."/>
            <person name="Liu Y."/>
            <person name="Wu C."/>
            <person name="Shi S."/>
            <person name="Ma D."/>
        </authorList>
    </citation>
    <scope>NUCLEOTIDE SEQUENCE [MRNA]</scope>
    <source>
        <tissue>Testis</tissue>
    </source>
</reference>
<reference key="2">
    <citation type="journal article" date="2004" name="Nat. Genet.">
        <title>Complete sequencing and characterization of 21,243 full-length human cDNAs.</title>
        <authorList>
            <person name="Ota T."/>
            <person name="Suzuki Y."/>
            <person name="Nishikawa T."/>
            <person name="Otsuki T."/>
            <person name="Sugiyama T."/>
            <person name="Irie R."/>
            <person name="Wakamatsu A."/>
            <person name="Hayashi K."/>
            <person name="Sato H."/>
            <person name="Nagai K."/>
            <person name="Kimura K."/>
            <person name="Makita H."/>
            <person name="Sekine M."/>
            <person name="Obayashi M."/>
            <person name="Nishi T."/>
            <person name="Shibahara T."/>
            <person name="Tanaka T."/>
            <person name="Ishii S."/>
            <person name="Yamamoto J."/>
            <person name="Saito K."/>
            <person name="Kawai Y."/>
            <person name="Isono Y."/>
            <person name="Nakamura Y."/>
            <person name="Nagahari K."/>
            <person name="Murakami K."/>
            <person name="Yasuda T."/>
            <person name="Iwayanagi T."/>
            <person name="Wagatsuma M."/>
            <person name="Shiratori A."/>
            <person name="Sudo H."/>
            <person name="Hosoiri T."/>
            <person name="Kaku Y."/>
            <person name="Kodaira H."/>
            <person name="Kondo H."/>
            <person name="Sugawara M."/>
            <person name="Takahashi M."/>
            <person name="Kanda K."/>
            <person name="Yokoi T."/>
            <person name="Furuya T."/>
            <person name="Kikkawa E."/>
            <person name="Omura Y."/>
            <person name="Abe K."/>
            <person name="Kamihara K."/>
            <person name="Katsuta N."/>
            <person name="Sato K."/>
            <person name="Tanikawa M."/>
            <person name="Yamazaki M."/>
            <person name="Ninomiya K."/>
            <person name="Ishibashi T."/>
            <person name="Yamashita H."/>
            <person name="Murakawa K."/>
            <person name="Fujimori K."/>
            <person name="Tanai H."/>
            <person name="Kimata M."/>
            <person name="Watanabe M."/>
            <person name="Hiraoka S."/>
            <person name="Chiba Y."/>
            <person name="Ishida S."/>
            <person name="Ono Y."/>
            <person name="Takiguchi S."/>
            <person name="Watanabe S."/>
            <person name="Yosida M."/>
            <person name="Hotuta T."/>
            <person name="Kusano J."/>
            <person name="Kanehori K."/>
            <person name="Takahashi-Fujii A."/>
            <person name="Hara H."/>
            <person name="Tanase T.-O."/>
            <person name="Nomura Y."/>
            <person name="Togiya S."/>
            <person name="Komai F."/>
            <person name="Hara R."/>
            <person name="Takeuchi K."/>
            <person name="Arita M."/>
            <person name="Imose N."/>
            <person name="Musashino K."/>
            <person name="Yuuki H."/>
            <person name="Oshima A."/>
            <person name="Sasaki N."/>
            <person name="Aotsuka S."/>
            <person name="Yoshikawa Y."/>
            <person name="Matsunawa H."/>
            <person name="Ichihara T."/>
            <person name="Shiohata N."/>
            <person name="Sano S."/>
            <person name="Moriya S."/>
            <person name="Momiyama H."/>
            <person name="Satoh N."/>
            <person name="Takami S."/>
            <person name="Terashima Y."/>
            <person name="Suzuki O."/>
            <person name="Nakagawa S."/>
            <person name="Senoh A."/>
            <person name="Mizoguchi H."/>
            <person name="Goto Y."/>
            <person name="Shimizu F."/>
            <person name="Wakebe H."/>
            <person name="Hishigaki H."/>
            <person name="Watanabe T."/>
            <person name="Sugiyama A."/>
            <person name="Takemoto M."/>
            <person name="Kawakami B."/>
            <person name="Yamazaki M."/>
            <person name="Watanabe K."/>
            <person name="Kumagai A."/>
            <person name="Itakura S."/>
            <person name="Fukuzumi Y."/>
            <person name="Fujimori Y."/>
            <person name="Komiyama M."/>
            <person name="Tashiro H."/>
            <person name="Tanigami A."/>
            <person name="Fujiwara T."/>
            <person name="Ono T."/>
            <person name="Yamada K."/>
            <person name="Fujii Y."/>
            <person name="Ozaki K."/>
            <person name="Hirao M."/>
            <person name="Ohmori Y."/>
            <person name="Kawabata A."/>
            <person name="Hikiji T."/>
            <person name="Kobatake N."/>
            <person name="Inagaki H."/>
            <person name="Ikema Y."/>
            <person name="Okamoto S."/>
            <person name="Okitani R."/>
            <person name="Kawakami T."/>
            <person name="Noguchi S."/>
            <person name="Itoh T."/>
            <person name="Shigeta K."/>
            <person name="Senba T."/>
            <person name="Matsumura K."/>
            <person name="Nakajima Y."/>
            <person name="Mizuno T."/>
            <person name="Morinaga M."/>
            <person name="Sasaki M."/>
            <person name="Togashi T."/>
            <person name="Oyama M."/>
            <person name="Hata H."/>
            <person name="Watanabe M."/>
            <person name="Komatsu T."/>
            <person name="Mizushima-Sugano J."/>
            <person name="Satoh T."/>
            <person name="Shirai Y."/>
            <person name="Takahashi Y."/>
            <person name="Nakagawa K."/>
            <person name="Okumura K."/>
            <person name="Nagase T."/>
            <person name="Nomura N."/>
            <person name="Kikuchi H."/>
            <person name="Masuho Y."/>
            <person name="Yamashita R."/>
            <person name="Nakai K."/>
            <person name="Yada T."/>
            <person name="Nakamura Y."/>
            <person name="Ohara O."/>
            <person name="Isogai T."/>
            <person name="Sugano S."/>
        </authorList>
    </citation>
    <scope>NUCLEOTIDE SEQUENCE [LARGE SCALE MRNA]</scope>
    <scope>VARIANTS GLN-127; LEU-161 AND MET-198</scope>
    <source>
        <tissue>Testis</tissue>
    </source>
</reference>
<reference key="3">
    <citation type="journal article" date="2003" name="Nature">
        <title>The DNA sequence of human chromosome 7.</title>
        <authorList>
            <person name="Hillier L.W."/>
            <person name="Fulton R.S."/>
            <person name="Fulton L.A."/>
            <person name="Graves T.A."/>
            <person name="Pepin K.H."/>
            <person name="Wagner-McPherson C."/>
            <person name="Layman D."/>
            <person name="Maas J."/>
            <person name="Jaeger S."/>
            <person name="Walker R."/>
            <person name="Wylie K."/>
            <person name="Sekhon M."/>
            <person name="Becker M.C."/>
            <person name="O'Laughlin M.D."/>
            <person name="Schaller M.E."/>
            <person name="Fewell G.A."/>
            <person name="Delehaunty K.D."/>
            <person name="Miner T.L."/>
            <person name="Nash W.E."/>
            <person name="Cordes M."/>
            <person name="Du H."/>
            <person name="Sun H."/>
            <person name="Edwards J."/>
            <person name="Bradshaw-Cordum H."/>
            <person name="Ali J."/>
            <person name="Andrews S."/>
            <person name="Isak A."/>
            <person name="Vanbrunt A."/>
            <person name="Nguyen C."/>
            <person name="Du F."/>
            <person name="Lamar B."/>
            <person name="Courtney L."/>
            <person name="Kalicki J."/>
            <person name="Ozersky P."/>
            <person name="Bielicki L."/>
            <person name="Scott K."/>
            <person name="Holmes A."/>
            <person name="Harkins R."/>
            <person name="Harris A."/>
            <person name="Strong C.M."/>
            <person name="Hou S."/>
            <person name="Tomlinson C."/>
            <person name="Dauphin-Kohlberg S."/>
            <person name="Kozlowicz-Reilly A."/>
            <person name="Leonard S."/>
            <person name="Rohlfing T."/>
            <person name="Rock S.M."/>
            <person name="Tin-Wollam A.-M."/>
            <person name="Abbott A."/>
            <person name="Minx P."/>
            <person name="Maupin R."/>
            <person name="Strowmatt C."/>
            <person name="Latreille P."/>
            <person name="Miller N."/>
            <person name="Johnson D."/>
            <person name="Murray J."/>
            <person name="Woessner J.P."/>
            <person name="Wendl M.C."/>
            <person name="Yang S.-P."/>
            <person name="Schultz B.R."/>
            <person name="Wallis J.W."/>
            <person name="Spieth J."/>
            <person name="Bieri T.A."/>
            <person name="Nelson J.O."/>
            <person name="Berkowicz N."/>
            <person name="Wohldmann P.E."/>
            <person name="Cook L.L."/>
            <person name="Hickenbotham M.T."/>
            <person name="Eldred J."/>
            <person name="Williams D."/>
            <person name="Bedell J.A."/>
            <person name="Mardis E.R."/>
            <person name="Clifton S.W."/>
            <person name="Chissoe S.L."/>
            <person name="Marra M.A."/>
            <person name="Raymond C."/>
            <person name="Haugen E."/>
            <person name="Gillett W."/>
            <person name="Zhou Y."/>
            <person name="James R."/>
            <person name="Phelps K."/>
            <person name="Iadanoto S."/>
            <person name="Bubb K."/>
            <person name="Simms E."/>
            <person name="Levy R."/>
            <person name="Clendenning J."/>
            <person name="Kaul R."/>
            <person name="Kent W.J."/>
            <person name="Furey T.S."/>
            <person name="Baertsch R.A."/>
            <person name="Brent M.R."/>
            <person name="Keibler E."/>
            <person name="Flicek P."/>
            <person name="Bork P."/>
            <person name="Suyama M."/>
            <person name="Bailey J.A."/>
            <person name="Portnoy M.E."/>
            <person name="Torrents D."/>
            <person name="Chinwalla A.T."/>
            <person name="Gish W.R."/>
            <person name="Eddy S.R."/>
            <person name="McPherson J.D."/>
            <person name="Olson M.V."/>
            <person name="Eichler E.E."/>
            <person name="Green E.D."/>
            <person name="Waterston R.H."/>
            <person name="Wilson R.K."/>
        </authorList>
    </citation>
    <scope>NUCLEOTIDE SEQUENCE [LARGE SCALE GENOMIC DNA]</scope>
</reference>
<reference key="4">
    <citation type="submission" date="2006-12" db="EMBL/GenBank/DDBJ databases">
        <authorList>
            <person name="Mural R.J."/>
            <person name="Istrail S."/>
            <person name="Sutton G.G."/>
            <person name="Florea L."/>
            <person name="Halpern A.L."/>
            <person name="Mobarry C.M."/>
            <person name="Lippert R."/>
            <person name="Walenz B."/>
            <person name="Shatkay H."/>
            <person name="Dew I."/>
            <person name="Miller J.R."/>
            <person name="Flanigan M.J."/>
            <person name="Edwards N.J."/>
            <person name="Bolanos R."/>
            <person name="Fasulo D."/>
            <person name="Halldorsson B.V."/>
            <person name="Hannenhalli S."/>
            <person name="Turner R."/>
            <person name="Yooseph S."/>
            <person name="Lu F."/>
            <person name="Nusskern D.R."/>
            <person name="Shue B.C."/>
            <person name="Zheng X.H."/>
            <person name="Zhong F."/>
            <person name="Delcher A.L."/>
            <person name="Huson D.H."/>
            <person name="Kravitz S.A."/>
            <person name="Mouchard L."/>
            <person name="Reinert K."/>
            <person name="Remington K.A."/>
            <person name="Clark A.G."/>
            <person name="Waterman M.S."/>
            <person name="Eichler E.E."/>
            <person name="Adams M.D."/>
            <person name="Hunkapiller M.W."/>
            <person name="Myers E.W."/>
            <person name="Venter J.C."/>
        </authorList>
    </citation>
    <scope>NUCLEOTIDE SEQUENCE [LARGE SCALE GENOMIC DNA]</scope>
    <scope>VARIANTS GLN-127; LEU-161 AND MET-198</scope>
</reference>
<reference key="5">
    <citation type="journal article" date="2004" name="Genome Res.">
        <title>The status, quality, and expansion of the NIH full-length cDNA project: the Mammalian Gene Collection (MGC).</title>
        <authorList>
            <consortium name="The MGC Project Team"/>
        </authorList>
    </citation>
    <scope>NUCLEOTIDE SEQUENCE [LARGE SCALE MRNA]</scope>
    <source>
        <tissue>Placenta</tissue>
    </source>
</reference>
<evidence type="ECO:0000250" key="1">
    <source>
        <dbReference type="UniProtKB" id="Q3ZN08"/>
    </source>
</evidence>
<evidence type="ECO:0000256" key="2">
    <source>
        <dbReference type="SAM" id="MobiDB-lite"/>
    </source>
</evidence>
<evidence type="ECO:0000269" key="3">
    <source>
    </source>
</evidence>
<evidence type="ECO:0000269" key="4">
    <source ref="4"/>
</evidence>
<evidence type="ECO:0000305" key="5"/>
<evidence type="ECO:0000312" key="6">
    <source>
        <dbReference type="HGNC" id="HGNC:22422"/>
    </source>
</evidence>
<keyword id="KW-0963">Cytoplasm</keyword>
<keyword id="KW-0968">Cytoplasmic vesicle</keyword>
<keyword id="KW-0539">Nucleus</keyword>
<keyword id="KW-1267">Proteomics identification</keyword>
<keyword id="KW-1185">Reference proteome</keyword>
<protein>
    <recommendedName>
        <fullName>Protein FAM220A</fullName>
    </recommendedName>
    <alternativeName>
        <fullName evidence="1">STAT3-interacting protein as a repressor</fullName>
    </alternativeName>
</protein>
<gene>
    <name evidence="6" type="primary">FAM220A</name>
    <name evidence="6" type="synonym">C7orf70</name>
    <name evidence="1" type="synonym">SIPAR</name>
</gene>
<feature type="chain" id="PRO_0000321923" description="Protein FAM220A">
    <location>
        <begin position="1"/>
        <end position="259"/>
    </location>
</feature>
<feature type="region of interest" description="Disordered" evidence="2">
    <location>
        <begin position="1"/>
        <end position="44"/>
    </location>
</feature>
<feature type="region of interest" description="Disordered" evidence="2">
    <location>
        <begin position="131"/>
        <end position="154"/>
    </location>
</feature>
<feature type="compositionally biased region" description="Basic and acidic residues" evidence="2">
    <location>
        <begin position="138"/>
        <end position="152"/>
    </location>
</feature>
<feature type="sequence variant" id="VAR_039375" description="In dbSNP:rs3750041.">
    <original>G</original>
    <variation>R</variation>
    <location>
        <position position="71"/>
    </location>
</feature>
<feature type="sequence variant" id="VAR_039376" description="In dbSNP:rs3750040." evidence="3 4">
    <original>R</original>
    <variation>Q</variation>
    <location>
        <position position="127"/>
    </location>
</feature>
<feature type="sequence variant" id="VAR_039377" description="In dbSNP:rs3750039." evidence="3 4">
    <original>V</original>
    <variation>L</variation>
    <location>
        <position position="161"/>
    </location>
</feature>
<feature type="sequence variant" id="VAR_039378" description="In dbSNP:rs6952125." evidence="3 4">
    <original>V</original>
    <variation>M</variation>
    <location>
        <position position="198"/>
    </location>
</feature>
<feature type="sequence variant" id="VAR_039379" description="In dbSNP:rs2241445.">
    <original>G</original>
    <variation>S</variation>
    <location>
        <position position="237"/>
    </location>
</feature>
<name>F220A_HUMAN</name>
<accession>Q7Z4H9</accession>
<accession>Q75ML2</accession>
<accession>Q8NA52</accession>
<accession>Q9BRR7</accession>
<proteinExistence type="evidence at protein level"/>
<sequence>MRDRRGPLGTCLAQVQQAGGGDSDKLSCSLKKRMPEGPWPADAPSWMNKPVVDGNSQSEALSLEMRKDPSGAGLWLHSGGPVLPYVRESVRRNPASAATPSTAVGLFPAPTECFARVSCSGVEALGRRDWLGGGPRATDGHRGQCPKGEPRVSRLPRHQKVPEMGSFQDDPPSAFPKGLGSELEPACLHSILSATLHVYPEVLLSEETKRIFLDRLKPMFSKQTIEFKKMLKSTSDGLQITLGLLALQPFELANTLCHS</sequence>
<comment type="function">
    <text evidence="1">Promotes dephosphorylation of transcriptional activator STAT3 by interacting with both STAT3 and protein phosphatase PTPN2. This promotes interaction of PTPN2 with STAT3 and mediates STAT3 dephosphorylation by PTPN2, leading to negative regulation of STAT3 transcriptional activator activity. May be required for spermiogenesis or sperm function.</text>
</comment>
<comment type="subunit">
    <text evidence="1">Interacts with transcriptional activator STAT3; the interaction occurs in both the nucleus and the cytoplasm, is enhanced by IL6 and promotes STAT3 dephosphorylation, leading to negative regulation of STAT3 transcriptional activator activity. Can interact with both unphosphorylated and phosphorylated STAT3 but interacts preferentially with phosphorylated STAT3 in the nucleus. Interacts with protein phosphatase PTPN2/TC45; this promotes interaction of PTPN2 with STAT3, leading to dephosphorylation of STAT3 by PTPN2.</text>
</comment>
<comment type="interaction">
    <interactant intactId="EBI-12871772">
        <id>Q7Z4H9</id>
    </interactant>
    <interactant intactId="EBI-11750983">
        <id>Q9HC98-4</id>
        <label>NEK6</label>
    </interactant>
    <organismsDiffer>false</organismsDiffer>
    <experiments>3</experiments>
</comment>
<comment type="interaction">
    <interactant intactId="EBI-12871772">
        <id>Q7Z4H9</id>
    </interactant>
    <interactant intactId="EBI-750487">
        <id>Q8WW24</id>
        <label>TEKT4</label>
    </interactant>
    <organismsDiffer>false</organismsDiffer>
    <experiments>3</experiments>
</comment>
<comment type="subcellular location">
    <subcellularLocation>
        <location evidence="1">Nucleus</location>
    </subcellularLocation>
    <subcellularLocation>
        <location evidence="1">Cytoplasm</location>
    </subcellularLocation>
    <subcellularLocation>
        <location evidence="1">Cytoplasmic vesicle</location>
        <location evidence="1">Secretory vesicle</location>
        <location evidence="1">Acrosome</location>
    </subcellularLocation>
    <text evidence="1">Localizes to both nucleus and cytoplasm but located predominantly in the nucleus. Detected in the sperm acrosome prior to the acrosome reaction and is likely to be released from acrosome-reacted sperm.</text>
</comment>
<comment type="sequence caution" evidence="5">
    <conflict type="erroneous gene model prediction">
        <sequence resource="EMBL-CDS" id="AAS07509"/>
    </conflict>
</comment>
<comment type="sequence caution" evidence="5">
    <conflict type="erroneous translation">
        <sequence resource="EMBL-CDS" id="BAG34819"/>
    </conflict>
    <text>Wrong choice of CDS.</text>
</comment>